<dbReference type="EC" id="1.14.99.1" evidence="7"/>
<dbReference type="EMBL" id="J03599">
    <property type="protein sequence ID" value="AAA31576.1"/>
    <property type="status" value="ALT_FRAME"/>
    <property type="molecule type" value="mRNA"/>
</dbReference>
<dbReference type="EMBL" id="Y00750">
    <property type="protein sequence ID" value="CAA68719.1"/>
    <property type="molecule type" value="mRNA"/>
</dbReference>
<dbReference type="EMBL" id="M18243">
    <property type="protein sequence ID" value="AAA31511.1"/>
    <property type="molecule type" value="mRNA"/>
</dbReference>
<dbReference type="PIR" id="A28960">
    <property type="entry name" value="A28960"/>
</dbReference>
<dbReference type="PIR" id="A29947">
    <property type="entry name" value="A29947"/>
</dbReference>
<dbReference type="PIR" id="S00561">
    <property type="entry name" value="S00561"/>
</dbReference>
<dbReference type="RefSeq" id="NP_001009476.1">
    <property type="nucleotide sequence ID" value="NM_001009476.1"/>
</dbReference>
<dbReference type="PDB" id="1CQE">
    <property type="method" value="X-ray"/>
    <property type="resolution" value="3.10 A"/>
    <property type="chains" value="A/B=21-600"/>
</dbReference>
<dbReference type="PDB" id="1DIY">
    <property type="method" value="X-ray"/>
    <property type="resolution" value="3.00 A"/>
    <property type="chains" value="A=32-584"/>
</dbReference>
<dbReference type="PDB" id="1EBV">
    <property type="method" value="X-ray"/>
    <property type="resolution" value="3.20 A"/>
    <property type="chains" value="A=33-583"/>
</dbReference>
<dbReference type="PDB" id="1EQG">
    <property type="method" value="X-ray"/>
    <property type="resolution" value="2.61 A"/>
    <property type="chains" value="A/B=21-600"/>
</dbReference>
<dbReference type="PDB" id="1EQH">
    <property type="method" value="X-ray"/>
    <property type="resolution" value="2.70 A"/>
    <property type="chains" value="A/B=21-600"/>
</dbReference>
<dbReference type="PDB" id="1FE2">
    <property type="method" value="X-ray"/>
    <property type="resolution" value="3.00 A"/>
    <property type="chains" value="A=25-600"/>
</dbReference>
<dbReference type="PDB" id="1HT5">
    <property type="method" value="X-ray"/>
    <property type="resolution" value="2.75 A"/>
    <property type="chains" value="A/B=33-583"/>
</dbReference>
<dbReference type="PDB" id="1HT8">
    <property type="method" value="X-ray"/>
    <property type="resolution" value="2.69 A"/>
    <property type="chains" value="A/B=33-583"/>
</dbReference>
<dbReference type="PDB" id="1IGX">
    <property type="method" value="X-ray"/>
    <property type="resolution" value="3.10 A"/>
    <property type="chains" value="A=25-600"/>
</dbReference>
<dbReference type="PDB" id="1IGZ">
    <property type="method" value="X-ray"/>
    <property type="resolution" value="2.90 A"/>
    <property type="chains" value="A=25-600"/>
</dbReference>
<dbReference type="PDB" id="1PGE">
    <property type="method" value="X-ray"/>
    <property type="resolution" value="3.50 A"/>
    <property type="chains" value="A/B=25-600"/>
</dbReference>
<dbReference type="PDB" id="1PGF">
    <property type="method" value="X-ray"/>
    <property type="resolution" value="4.50 A"/>
    <property type="chains" value="A/B=25-600"/>
</dbReference>
<dbReference type="PDB" id="1PGG">
    <property type="method" value="X-ray"/>
    <property type="resolution" value="4.50 A"/>
    <property type="chains" value="A/B=25-600"/>
</dbReference>
<dbReference type="PDB" id="1PRH">
    <property type="method" value="X-ray"/>
    <property type="resolution" value="3.50 A"/>
    <property type="chains" value="A/B=33-586"/>
</dbReference>
<dbReference type="PDB" id="1PTH">
    <property type="method" value="X-ray"/>
    <property type="resolution" value="3.40 A"/>
    <property type="chains" value="A/B=25-600"/>
</dbReference>
<dbReference type="PDB" id="1Q4G">
    <property type="method" value="X-ray"/>
    <property type="resolution" value="2.00 A"/>
    <property type="chains" value="A/B=32-584"/>
</dbReference>
<dbReference type="PDB" id="1U67">
    <property type="method" value="X-ray"/>
    <property type="resolution" value="3.10 A"/>
    <property type="chains" value="A=1-600"/>
</dbReference>
<dbReference type="PDB" id="2AYL">
    <property type="method" value="X-ray"/>
    <property type="resolution" value="2.00 A"/>
    <property type="chains" value="A/B=32-584"/>
</dbReference>
<dbReference type="PDB" id="2OYE">
    <property type="method" value="X-ray"/>
    <property type="resolution" value="2.85 A"/>
    <property type="chains" value="P=1-600"/>
</dbReference>
<dbReference type="PDB" id="2OYU">
    <property type="method" value="X-ray"/>
    <property type="resolution" value="2.70 A"/>
    <property type="chains" value="P=1-600"/>
</dbReference>
<dbReference type="PDB" id="3KK6">
    <property type="method" value="X-ray"/>
    <property type="resolution" value="2.75 A"/>
    <property type="chains" value="A/B=32-584"/>
</dbReference>
<dbReference type="PDB" id="3N8V">
    <property type="method" value="X-ray"/>
    <property type="resolution" value="3.05 A"/>
    <property type="chains" value="A/B=32-584"/>
</dbReference>
<dbReference type="PDB" id="3N8W">
    <property type="method" value="X-ray"/>
    <property type="resolution" value="2.75 A"/>
    <property type="chains" value="A/B=32-584"/>
</dbReference>
<dbReference type="PDB" id="3N8X">
    <property type="method" value="X-ray"/>
    <property type="resolution" value="2.75 A"/>
    <property type="chains" value="A/B=32-584"/>
</dbReference>
<dbReference type="PDB" id="3N8Y">
    <property type="method" value="X-ray"/>
    <property type="resolution" value="2.60 A"/>
    <property type="chains" value="A/B=32-584"/>
</dbReference>
<dbReference type="PDB" id="3N8Z">
    <property type="method" value="X-ray"/>
    <property type="resolution" value="2.90 A"/>
    <property type="chains" value="A/B=32-584"/>
</dbReference>
<dbReference type="PDB" id="4O1Z">
    <property type="method" value="X-ray"/>
    <property type="resolution" value="2.40 A"/>
    <property type="chains" value="A/B=32-600"/>
</dbReference>
<dbReference type="PDB" id="5U6X">
    <property type="method" value="X-ray"/>
    <property type="resolution" value="2.93 A"/>
    <property type="chains" value="A/B=1-600"/>
</dbReference>
<dbReference type="PDB" id="5WBE">
    <property type="method" value="X-ray"/>
    <property type="resolution" value="2.75 A"/>
    <property type="chains" value="A/B=1-600"/>
</dbReference>
<dbReference type="PDB" id="7JXT">
    <property type="method" value="X-ray"/>
    <property type="resolution" value="3.35 A"/>
    <property type="chains" value="A/B=32-584"/>
</dbReference>
<dbReference type="PDBsum" id="1CQE"/>
<dbReference type="PDBsum" id="1DIY"/>
<dbReference type="PDBsum" id="1EBV"/>
<dbReference type="PDBsum" id="1EQG"/>
<dbReference type="PDBsum" id="1EQH"/>
<dbReference type="PDBsum" id="1FE2"/>
<dbReference type="PDBsum" id="1HT5"/>
<dbReference type="PDBsum" id="1HT8"/>
<dbReference type="PDBsum" id="1IGX"/>
<dbReference type="PDBsum" id="1IGZ"/>
<dbReference type="PDBsum" id="1PGE"/>
<dbReference type="PDBsum" id="1PGF"/>
<dbReference type="PDBsum" id="1PGG"/>
<dbReference type="PDBsum" id="1PRH"/>
<dbReference type="PDBsum" id="1PTH"/>
<dbReference type="PDBsum" id="1Q4G"/>
<dbReference type="PDBsum" id="1U67"/>
<dbReference type="PDBsum" id="2AYL"/>
<dbReference type="PDBsum" id="2OYE"/>
<dbReference type="PDBsum" id="2OYU"/>
<dbReference type="PDBsum" id="3KK6"/>
<dbReference type="PDBsum" id="3N8V"/>
<dbReference type="PDBsum" id="3N8W"/>
<dbReference type="PDBsum" id="3N8X"/>
<dbReference type="PDBsum" id="3N8Y"/>
<dbReference type="PDBsum" id="3N8Z"/>
<dbReference type="PDBsum" id="4O1Z"/>
<dbReference type="PDBsum" id="5U6X"/>
<dbReference type="PDBsum" id="5WBE"/>
<dbReference type="PDBsum" id="7JXT"/>
<dbReference type="SMR" id="P05979"/>
<dbReference type="STRING" id="9940.ENSOARP00000015152"/>
<dbReference type="BindingDB" id="P05979"/>
<dbReference type="ChEMBL" id="CHEMBL2949"/>
<dbReference type="DrugCentral" id="P05979"/>
<dbReference type="MoonProt" id="P05979"/>
<dbReference type="PeroxiBase" id="4121">
    <property type="entry name" value="OarPGHS01"/>
</dbReference>
<dbReference type="GlyCosmos" id="P05979">
    <property type="glycosylation" value="3 sites, No reported glycans"/>
</dbReference>
<dbReference type="iPTMnet" id="P05979"/>
<dbReference type="PaxDb" id="9940-ENSOARP00000015152"/>
<dbReference type="GeneID" id="443551"/>
<dbReference type="KEGG" id="oas:443551"/>
<dbReference type="CTD" id="5742"/>
<dbReference type="eggNOG" id="KOG2408">
    <property type="taxonomic scope" value="Eukaryota"/>
</dbReference>
<dbReference type="OrthoDB" id="823504at2759"/>
<dbReference type="BRENDA" id="1.14.99.1">
    <property type="organism ID" value="2668"/>
</dbReference>
<dbReference type="SABIO-RK" id="P05979"/>
<dbReference type="UniPathway" id="UPA00662"/>
<dbReference type="EvolutionaryTrace" id="P05979"/>
<dbReference type="PRO" id="PR:P05979"/>
<dbReference type="Proteomes" id="UP000002356">
    <property type="component" value="Unplaced"/>
</dbReference>
<dbReference type="GO" id="GO:0005737">
    <property type="term" value="C:cytoplasm"/>
    <property type="evidence" value="ECO:0000250"/>
    <property type="project" value="UniProtKB"/>
</dbReference>
<dbReference type="GO" id="GO:0005789">
    <property type="term" value="C:endoplasmic reticulum membrane"/>
    <property type="evidence" value="ECO:0007669"/>
    <property type="project" value="UniProtKB-SubCell"/>
</dbReference>
<dbReference type="GO" id="GO:0043005">
    <property type="term" value="C:neuron projection"/>
    <property type="evidence" value="ECO:0007669"/>
    <property type="project" value="TreeGrafter"/>
</dbReference>
<dbReference type="GO" id="GO:0020037">
    <property type="term" value="F:heme binding"/>
    <property type="evidence" value="ECO:0000314"/>
    <property type="project" value="CAFA"/>
</dbReference>
<dbReference type="GO" id="GO:0046872">
    <property type="term" value="F:metal ion binding"/>
    <property type="evidence" value="ECO:0007669"/>
    <property type="project" value="UniProtKB-KW"/>
</dbReference>
<dbReference type="GO" id="GO:0016702">
    <property type="term" value="F:oxidoreductase activity, acting on single donors with incorporation of molecular oxygen, incorporation of two atoms of oxygen"/>
    <property type="evidence" value="ECO:0007669"/>
    <property type="project" value="TreeGrafter"/>
</dbReference>
<dbReference type="GO" id="GO:0004601">
    <property type="term" value="F:peroxidase activity"/>
    <property type="evidence" value="ECO:0007669"/>
    <property type="project" value="UniProtKB-KW"/>
</dbReference>
<dbReference type="GO" id="GO:0004666">
    <property type="term" value="F:prostaglandin-endoperoxide synthase activity"/>
    <property type="evidence" value="ECO:0000315"/>
    <property type="project" value="CAFA"/>
</dbReference>
<dbReference type="GO" id="GO:0042803">
    <property type="term" value="F:protein homodimerization activity"/>
    <property type="evidence" value="ECO:0000314"/>
    <property type="project" value="CAFA"/>
</dbReference>
<dbReference type="GO" id="GO:0019371">
    <property type="term" value="P:cyclooxygenase pathway"/>
    <property type="evidence" value="ECO:0000315"/>
    <property type="project" value="CAFA"/>
</dbReference>
<dbReference type="GO" id="GO:0001516">
    <property type="term" value="P:prostaglandin biosynthetic process"/>
    <property type="evidence" value="ECO:0000250"/>
    <property type="project" value="UniProtKB"/>
</dbReference>
<dbReference type="GO" id="GO:0008217">
    <property type="term" value="P:regulation of blood pressure"/>
    <property type="evidence" value="ECO:0000250"/>
    <property type="project" value="UniProtKB"/>
</dbReference>
<dbReference type="GO" id="GO:0006979">
    <property type="term" value="P:response to oxidative stress"/>
    <property type="evidence" value="ECO:0007669"/>
    <property type="project" value="InterPro"/>
</dbReference>
<dbReference type="CDD" id="cd00054">
    <property type="entry name" value="EGF_CA"/>
    <property type="match status" value="1"/>
</dbReference>
<dbReference type="CDD" id="cd09816">
    <property type="entry name" value="prostaglandin_endoperoxide_synthase"/>
    <property type="match status" value="1"/>
</dbReference>
<dbReference type="FunFam" id="1.10.640.10:FF:000002">
    <property type="entry name" value="Prostaglandin G/H synthase 2"/>
    <property type="match status" value="1"/>
</dbReference>
<dbReference type="FunFam" id="2.10.25.10:FF:000235">
    <property type="entry name" value="Prostaglandin G/H synthase 2"/>
    <property type="match status" value="1"/>
</dbReference>
<dbReference type="Gene3D" id="1.10.640.10">
    <property type="entry name" value="Haem peroxidase domain superfamily, animal type"/>
    <property type="match status" value="1"/>
</dbReference>
<dbReference type="Gene3D" id="2.10.25.10">
    <property type="entry name" value="Laminin"/>
    <property type="match status" value="1"/>
</dbReference>
<dbReference type="InterPro" id="IPR000742">
    <property type="entry name" value="EGF-like_dom"/>
</dbReference>
<dbReference type="InterPro" id="IPR019791">
    <property type="entry name" value="Haem_peroxidase_animal"/>
</dbReference>
<dbReference type="InterPro" id="IPR010255">
    <property type="entry name" value="Haem_peroxidase_sf"/>
</dbReference>
<dbReference type="InterPro" id="IPR037120">
    <property type="entry name" value="Haem_peroxidase_sf_animal"/>
</dbReference>
<dbReference type="InterPro" id="IPR050783">
    <property type="entry name" value="Oxylipin_biosynth_metab"/>
</dbReference>
<dbReference type="PANTHER" id="PTHR11903">
    <property type="entry name" value="PROSTAGLANDIN G/H SYNTHASE"/>
    <property type="match status" value="1"/>
</dbReference>
<dbReference type="PANTHER" id="PTHR11903:SF6">
    <property type="entry name" value="PROSTAGLANDIN G_H SYNTHASE 1"/>
    <property type="match status" value="1"/>
</dbReference>
<dbReference type="Pfam" id="PF03098">
    <property type="entry name" value="An_peroxidase"/>
    <property type="match status" value="1"/>
</dbReference>
<dbReference type="PRINTS" id="PR00457">
    <property type="entry name" value="ANPEROXIDASE"/>
</dbReference>
<dbReference type="SUPFAM" id="SSF57196">
    <property type="entry name" value="EGF/Laminin"/>
    <property type="match status" value="1"/>
</dbReference>
<dbReference type="SUPFAM" id="SSF48113">
    <property type="entry name" value="Heme-dependent peroxidases"/>
    <property type="match status" value="1"/>
</dbReference>
<dbReference type="PROSITE" id="PS50026">
    <property type="entry name" value="EGF_3"/>
    <property type="match status" value="1"/>
</dbReference>
<dbReference type="PROSITE" id="PS50292">
    <property type="entry name" value="PEROXIDASE_3"/>
    <property type="match status" value="1"/>
</dbReference>
<accession>P05979</accession>
<organism>
    <name type="scientific">Ovis aries</name>
    <name type="common">Sheep</name>
    <dbReference type="NCBI Taxonomy" id="9940"/>
    <lineage>
        <taxon>Eukaryota</taxon>
        <taxon>Metazoa</taxon>
        <taxon>Chordata</taxon>
        <taxon>Craniata</taxon>
        <taxon>Vertebrata</taxon>
        <taxon>Euteleostomi</taxon>
        <taxon>Mammalia</taxon>
        <taxon>Eutheria</taxon>
        <taxon>Laurasiatheria</taxon>
        <taxon>Artiodactyla</taxon>
        <taxon>Ruminantia</taxon>
        <taxon>Pecora</taxon>
        <taxon>Bovidae</taxon>
        <taxon>Caprinae</taxon>
        <taxon>Ovis</taxon>
    </lineage>
</organism>
<proteinExistence type="evidence at protein level"/>
<comment type="function">
    <text evidence="3 7 9">Dual cyclooxygenase and peroxidase that plays an important role in the biosynthesis pathway of prostanoids, a class of C20 oxylipins mainly derived from arachidonate ((5Z,8Z,11Z,14Z)-eicosatetraenoate, AA, C20:4(n-6)), with a particular role in the inflammatory response (PubMed:9448728). The cyclooxygenase activity oxygenates AA to the hydroperoxy endoperoxide prostaglandin G2 (PGG2), and the peroxidase activity reduces PGG2 to the hydroxy endoperoxide prostaglandin H2 (PGH2), the precursor of all 2-series prostaglandins and thromboxanes. This complex transformation is initiated by abstraction of hydrogen at carbon 13 (with S-stereochemistry), followed by insertion of molecular O2 to form the endoperoxide bridge between carbon 9 and 11 that defines prostaglandins. The insertion of a second molecule of O2 (bis-oxygenase activity) yields a hydroperoxy group in PGG2 that is then reduced to PGH2 by two electrons (PubMed:7947975). Involved in the constitutive production of prostanoids in particular in the stomach and platelets. In gastric epithelial cells, it is a key step in the generation of prostaglandins, such as prostaglandin E2 (PGE2), which plays an important role in cytoprotection. In platelets, it is involved in the generation of thromboxane A2 (TXA2), which promotes platelet activation and aggregation, vasoconstriction and proliferation of vascular smooth muscle cells (PubMed:10438452). Can also use linoleate (LA, (9Z,12Z)-octadecadienoate, C18:2(n-6)) as substrate and produce hydroxyoctadecadienoates (HODEs) in a regio- and stereospecific manner, being (9R)-HODE ((9R)-hydroxy-(10E,12Z)-octadecadienoate) and (13S)-HODE ((13S)-hydroxy-(9Z,11E)-octadecadienoate) its major products (PubMed:9448728).</text>
</comment>
<comment type="catalytic activity">
    <reaction evidence="7">
        <text>(5Z,8Z,11Z,14Z)-eicosatetraenoate + AH2 + 2 O2 = prostaglandin H2 + A + H2O</text>
        <dbReference type="Rhea" id="RHEA:23728"/>
        <dbReference type="ChEBI" id="CHEBI:13193"/>
        <dbReference type="ChEBI" id="CHEBI:15377"/>
        <dbReference type="ChEBI" id="CHEBI:15379"/>
        <dbReference type="ChEBI" id="CHEBI:17499"/>
        <dbReference type="ChEBI" id="CHEBI:32395"/>
        <dbReference type="ChEBI" id="CHEBI:57405"/>
        <dbReference type="EC" id="1.14.99.1"/>
    </reaction>
    <physiologicalReaction direction="left-to-right" evidence="11">
        <dbReference type="Rhea" id="RHEA:23729"/>
    </physiologicalReaction>
</comment>
<comment type="catalytic activity">
    <reaction evidence="7">
        <text>(5Z,8Z,11Z,14Z)-eicosatetraenoate + 2 O2 = prostaglandin G2</text>
        <dbReference type="Rhea" id="RHEA:42596"/>
        <dbReference type="ChEBI" id="CHEBI:15379"/>
        <dbReference type="ChEBI" id="CHEBI:32395"/>
        <dbReference type="ChEBI" id="CHEBI:82629"/>
    </reaction>
    <physiologicalReaction direction="left-to-right" evidence="11">
        <dbReference type="Rhea" id="RHEA:42597"/>
    </physiologicalReaction>
</comment>
<comment type="catalytic activity">
    <reaction evidence="7">
        <text>prostaglandin G2 + AH2 = prostaglandin H2 + A + H2O</text>
        <dbReference type="Rhea" id="RHEA:42600"/>
        <dbReference type="ChEBI" id="CHEBI:13193"/>
        <dbReference type="ChEBI" id="CHEBI:15377"/>
        <dbReference type="ChEBI" id="CHEBI:17499"/>
        <dbReference type="ChEBI" id="CHEBI:57405"/>
        <dbReference type="ChEBI" id="CHEBI:82629"/>
    </reaction>
    <physiologicalReaction direction="left-to-right" evidence="11">
        <dbReference type="Rhea" id="RHEA:42601"/>
    </physiologicalReaction>
</comment>
<comment type="catalytic activity">
    <reaction evidence="9">
        <text>(9Z,12Z)-octadecadienoate + AH2 + O2 = (9R)-hydroxy-(10E,12Z)-octadecadienoate + A + H2O</text>
        <dbReference type="Rhea" id="RHEA:75447"/>
        <dbReference type="ChEBI" id="CHEBI:13193"/>
        <dbReference type="ChEBI" id="CHEBI:15377"/>
        <dbReference type="ChEBI" id="CHEBI:15379"/>
        <dbReference type="ChEBI" id="CHEBI:17499"/>
        <dbReference type="ChEBI" id="CHEBI:30245"/>
        <dbReference type="ChEBI" id="CHEBI:77895"/>
    </reaction>
    <physiologicalReaction direction="left-to-right" evidence="12">
        <dbReference type="Rhea" id="RHEA:75448"/>
    </physiologicalReaction>
</comment>
<comment type="catalytic activity">
    <reaction evidence="9">
        <text>(9Z,12Z)-octadecadienoate + AH2 + O2 = (9S)-hydroxy-(10E,12Z)-octadecadienoate + A + H2O</text>
        <dbReference type="Rhea" id="RHEA:75459"/>
        <dbReference type="ChEBI" id="CHEBI:13193"/>
        <dbReference type="ChEBI" id="CHEBI:15377"/>
        <dbReference type="ChEBI" id="CHEBI:15379"/>
        <dbReference type="ChEBI" id="CHEBI:17499"/>
        <dbReference type="ChEBI" id="CHEBI:30245"/>
        <dbReference type="ChEBI" id="CHEBI:77852"/>
    </reaction>
    <physiologicalReaction direction="left-to-right" evidence="12">
        <dbReference type="Rhea" id="RHEA:75460"/>
    </physiologicalReaction>
</comment>
<comment type="catalytic activity">
    <reaction evidence="9">
        <text>(9Z,12Z)-octadecadienoate + AH2 + O2 = (13S)-hydroxy-(9Z,11E)-octadecadienoate + A + H2O</text>
        <dbReference type="Rhea" id="RHEA:75451"/>
        <dbReference type="ChEBI" id="CHEBI:13193"/>
        <dbReference type="ChEBI" id="CHEBI:15377"/>
        <dbReference type="ChEBI" id="CHEBI:15379"/>
        <dbReference type="ChEBI" id="CHEBI:17499"/>
        <dbReference type="ChEBI" id="CHEBI:30245"/>
        <dbReference type="ChEBI" id="CHEBI:90850"/>
    </reaction>
    <physiologicalReaction direction="left-to-right" evidence="12">
        <dbReference type="Rhea" id="RHEA:75452"/>
    </physiologicalReaction>
</comment>
<comment type="catalytic activity">
    <reaction evidence="9">
        <text>(9Z,12Z)-octadecadienoate + AH2 + O2 = (13R)-hydroxy-(9Z,11E)-octadecadienoate + A + H2O</text>
        <dbReference type="Rhea" id="RHEA:75455"/>
        <dbReference type="ChEBI" id="CHEBI:13193"/>
        <dbReference type="ChEBI" id="CHEBI:15377"/>
        <dbReference type="ChEBI" id="CHEBI:15379"/>
        <dbReference type="ChEBI" id="CHEBI:17499"/>
        <dbReference type="ChEBI" id="CHEBI:30245"/>
        <dbReference type="ChEBI" id="CHEBI:136655"/>
    </reaction>
    <physiologicalReaction direction="left-to-right" evidence="12">
        <dbReference type="Rhea" id="RHEA:75456"/>
    </physiologicalReaction>
</comment>
<comment type="cofactor">
    <cofactor>
        <name>heme b</name>
        <dbReference type="ChEBI" id="CHEBI:60344"/>
    </cofactor>
    <text>Binds 1 heme b (iron(II)-protoporphyrin IX) group per subunit.</text>
</comment>
<comment type="activity regulation">
    <text evidence="1">The cyclooxygenase activity is inhibited by nonsteroidal anti-inflammatory drugs (NSAIDs) including ibuprofen, flurbiprofen, ketoprofen, naproxen, flurbiprofen, anirolac, fenclofenac and diclofenac.</text>
</comment>
<comment type="biophysicochemical properties">
    <kinetics>
        <KM evidence="7">5.1 uM for arachidonate</KM>
    </kinetics>
</comment>
<comment type="pathway">
    <text evidence="7">Lipid metabolism; prostaglandin biosynthesis.</text>
</comment>
<comment type="subunit">
    <text>Homodimer.</text>
</comment>
<comment type="subcellular location">
    <subcellularLocation>
        <location>Endoplasmic reticulum membrane</location>
        <topology>Multi-pass membrane protein</topology>
    </subcellularLocation>
    <subcellularLocation>
        <location>Microsome membrane</location>
        <topology>Multi-pass membrane protein</topology>
    </subcellularLocation>
</comment>
<comment type="miscellaneous">
    <text>The conversion of arachidonate to prostaglandin H2 is a 2 step reaction: a cyclooxygenase (COX) reaction which converts arachidonate to prostaglandin G2 (PGG2) and a peroxidase reaction in which PGG2 is reduced to prostaglandin H2 (PGH2). The cyclooxygenase reaction occurs in a hydrophobic channel in the core of the enzyme. The peroxidase reaction occurs at a heme-containing active site located near the protein surface. The nonsteroidal anti-inflammatory drugs (NSAIDs) binding site corresponds to the cyclooxygenase active site.</text>
</comment>
<comment type="miscellaneous">
    <text>Conversion of arachidonate to prostaglandin H2 is mediated by 2 different isozymes: the constitutive PTGS1 and the inducible PTGS2. PTGS1 is expressed constitutively and generally produces prostanoids acutely in response to hormonal stimuli to fine-tune physiological processes requiring instantaneous, continuous regulation (e.g. hemostasis). PTGS2 is inducible and typically produces prostanoids that mediate responses to physiological stresses such as infection and inflammation.</text>
</comment>
<comment type="miscellaneous">
    <text>PTGS1 and PTGS2 are the targets of nonsteroidal anti-inflammatory drugs (NSAIDs) including aspirin and ibuprofen. Aspirin is able to produce an irreversible inactivation of the enzyme through a serine acetylation. Inhibition of the PGHSs with NSAIDs acutely reduces inflammation, pain, and fever, and long-term use of these drugs reduces fatal thrombotic events, as well as the development of colon cancer and Alzheimer's disease. PTGS2 is the principal isozyme responsible for production of inflammatory prostaglandins. New generation PTGSs inhibitors strive to be selective for PTGS2, to avoid side effects such as gastrointestinal complications and ulceration.</text>
</comment>
<comment type="similarity">
    <text evidence="10">Belongs to the prostaglandin G/H synthase family.</text>
</comment>
<comment type="sequence caution" evidence="10">
    <conflict type="frameshift">
        <sequence resource="EMBL-CDS" id="AAA31576"/>
    </conflict>
</comment>
<evidence type="ECO:0000250" key="1">
    <source>
        <dbReference type="UniProtKB" id="P23219"/>
    </source>
</evidence>
<evidence type="ECO:0000255" key="2">
    <source>
        <dbReference type="PROSITE-ProRule" id="PRU00076"/>
    </source>
</evidence>
<evidence type="ECO:0000269" key="3">
    <source>
    </source>
</evidence>
<evidence type="ECO:0000269" key="4">
    <source>
    </source>
</evidence>
<evidence type="ECO:0000269" key="5">
    <source>
    </source>
</evidence>
<evidence type="ECO:0000269" key="6">
    <source>
    </source>
</evidence>
<evidence type="ECO:0000269" key="7">
    <source>
    </source>
</evidence>
<evidence type="ECO:0000269" key="8">
    <source>
    </source>
</evidence>
<evidence type="ECO:0000269" key="9">
    <source>
    </source>
</evidence>
<evidence type="ECO:0000305" key="10"/>
<evidence type="ECO:0000305" key="11">
    <source>
    </source>
</evidence>
<evidence type="ECO:0000305" key="12">
    <source>
    </source>
</evidence>
<evidence type="ECO:0007829" key="13">
    <source>
        <dbReference type="PDB" id="1EQG"/>
    </source>
</evidence>
<evidence type="ECO:0007829" key="14">
    <source>
        <dbReference type="PDB" id="1Q4G"/>
    </source>
</evidence>
<evidence type="ECO:0007829" key="15">
    <source>
        <dbReference type="PDB" id="2OYU"/>
    </source>
</evidence>
<evidence type="ECO:0007829" key="16">
    <source>
        <dbReference type="PDB" id="3KK6"/>
    </source>
</evidence>
<evidence type="ECO:0007829" key="17">
    <source>
        <dbReference type="PDB" id="5WBE"/>
    </source>
</evidence>
<feature type="signal peptide">
    <location>
        <begin position="1"/>
        <end position="24"/>
    </location>
</feature>
<feature type="chain" id="PRO_0000023871" description="Prostaglandin G/H synthase 1">
    <location>
        <begin position="25"/>
        <end position="600"/>
    </location>
</feature>
<feature type="transmembrane region" description="Helical">
    <location>
        <begin position="74"/>
        <end position="82"/>
    </location>
</feature>
<feature type="transmembrane region" description="Helical">
    <location>
        <begin position="86"/>
        <end position="92"/>
    </location>
</feature>
<feature type="transmembrane region" description="Helical">
    <location>
        <begin position="97"/>
        <end position="105"/>
    </location>
</feature>
<feature type="transmembrane region" description="Helical">
    <location>
        <begin position="108"/>
        <end position="122"/>
    </location>
</feature>
<feature type="domain" description="EGF-like" evidence="2">
    <location>
        <begin position="32"/>
        <end position="70"/>
    </location>
</feature>
<feature type="active site" description="Proton acceptor">
    <location>
        <position position="207"/>
    </location>
</feature>
<feature type="active site" description="For cyclooxygenase activity" evidence="4">
    <location>
        <position position="385"/>
    </location>
</feature>
<feature type="binding site" description="axial binding residue">
    <location>
        <position position="388"/>
    </location>
    <ligand>
        <name>heme b</name>
        <dbReference type="ChEBI" id="CHEBI:60344"/>
    </ligand>
    <ligandPart>
        <name>Fe</name>
        <dbReference type="ChEBI" id="CHEBI:18248"/>
    </ligandPart>
</feature>
<feature type="site" description="Not glycosylated" evidence="8">
    <location>
        <position position="104"/>
    </location>
</feature>
<feature type="site" description="Aspirin-acetylated serine">
    <location>
        <position position="530"/>
    </location>
</feature>
<feature type="glycosylation site" description="N-linked (GlcNAc...) asparagine" evidence="8">
    <location>
        <position position="68"/>
    </location>
</feature>
<feature type="glycosylation site" description="N-linked (GlcNAc...) asparagine" evidence="8">
    <location>
        <position position="144"/>
    </location>
</feature>
<feature type="glycosylation site" description="N-linked (GlcNAc...) asparagine" evidence="8">
    <location>
        <position position="410"/>
    </location>
</feature>
<feature type="disulfide bond">
    <location>
        <begin position="36"/>
        <end position="47"/>
    </location>
</feature>
<feature type="disulfide bond">
    <location>
        <begin position="37"/>
        <end position="159"/>
    </location>
</feature>
<feature type="disulfide bond">
    <location>
        <begin position="41"/>
        <end position="57"/>
    </location>
</feature>
<feature type="disulfide bond">
    <location>
        <begin position="59"/>
        <end position="69"/>
    </location>
</feature>
<feature type="disulfide bond">
    <location>
        <begin position="569"/>
        <end position="575"/>
    </location>
</feature>
<feature type="sequence variant">
    <original>R</original>
    <variation>H</variation>
    <location>
        <position position="97"/>
    </location>
</feature>
<feature type="sequence variant" evidence="5 6">
    <original>D</original>
    <variation>G</variation>
    <location>
        <position position="164"/>
    </location>
</feature>
<feature type="sequence variant">
    <original>R</original>
    <variation>Q</variation>
    <location>
        <position position="456"/>
    </location>
</feature>
<feature type="sequence variant">
    <original>E</original>
    <variation>K</variation>
    <location>
        <position position="520"/>
    </location>
</feature>
<feature type="sequence variant">
    <original>E</original>
    <variation>Q</variation>
    <location>
        <position position="520"/>
    </location>
</feature>
<feature type="sequence variant">
    <original>M</original>
    <variation>I</variation>
    <location>
        <position position="525"/>
    </location>
</feature>
<feature type="mutagenesis site" description="Abolishes cyclooxygenase activity." evidence="4">
    <original>Y</original>
    <variation>F</variation>
    <location>
        <position position="385"/>
    </location>
</feature>
<feature type="sequence conflict" description="In Ref. 3; AAA31511." evidence="10" ref="3">
    <original>MSRQS</original>
    <variation>MVQG</variation>
    <location>
        <begin position="1"/>
        <end position="5"/>
    </location>
</feature>
<feature type="sequence conflict" description="In Ref. 1; AAA31576 and 3; AAA31511." evidence="10" ref="1 3">
    <original>S</original>
    <variation>G</variation>
    <location>
        <position position="193"/>
    </location>
</feature>
<feature type="sequence conflict" description="In Ref. 4; AA sequence." evidence="10" ref="4">
    <original>C</original>
    <variation>E</variation>
    <location>
        <position position="540"/>
    </location>
</feature>
<feature type="helix" evidence="14">
    <location>
        <begin position="35"/>
        <end position="38"/>
    </location>
</feature>
<feature type="strand" evidence="14">
    <location>
        <begin position="46"/>
        <end position="50"/>
    </location>
</feature>
<feature type="turn" evidence="14">
    <location>
        <begin position="51"/>
        <end position="53"/>
    </location>
</feature>
<feature type="strand" evidence="14">
    <location>
        <begin position="54"/>
        <end position="58"/>
    </location>
</feature>
<feature type="strand" evidence="14">
    <location>
        <begin position="62"/>
        <end position="65"/>
    </location>
</feature>
<feature type="turn" evidence="14">
    <location>
        <begin position="66"/>
        <end position="69"/>
    </location>
</feature>
<feature type="helix" evidence="14">
    <location>
        <begin position="74"/>
        <end position="82"/>
    </location>
</feature>
<feature type="helix" evidence="14">
    <location>
        <begin position="86"/>
        <end position="93"/>
    </location>
</feature>
<feature type="helix" evidence="14">
    <location>
        <begin position="97"/>
        <end position="103"/>
    </location>
</feature>
<feature type="helix" evidence="14">
    <location>
        <begin position="108"/>
        <end position="121"/>
    </location>
</feature>
<feature type="strand" evidence="14">
    <location>
        <begin position="130"/>
        <end position="133"/>
    </location>
</feature>
<feature type="strand" evidence="13">
    <location>
        <begin position="134"/>
        <end position="136"/>
    </location>
</feature>
<feature type="helix" evidence="14">
    <location>
        <begin position="139"/>
        <end position="143"/>
    </location>
</feature>
<feature type="strand" evidence="14">
    <location>
        <begin position="149"/>
        <end position="152"/>
    </location>
</feature>
<feature type="strand" evidence="13">
    <location>
        <begin position="159"/>
        <end position="161"/>
    </location>
</feature>
<feature type="strand" evidence="14">
    <location>
        <begin position="164"/>
        <end position="167"/>
    </location>
</feature>
<feature type="helix" evidence="14">
    <location>
        <begin position="174"/>
        <end position="181"/>
    </location>
</feature>
<feature type="helix" evidence="14">
    <location>
        <begin position="196"/>
        <end position="206"/>
    </location>
</feature>
<feature type="turn" evidence="14">
    <location>
        <begin position="207"/>
        <end position="209"/>
    </location>
</feature>
<feature type="turn" evidence="14">
    <location>
        <begin position="214"/>
        <end position="216"/>
    </location>
</feature>
<feature type="strand" evidence="14">
    <location>
        <begin position="220"/>
        <end position="222"/>
    </location>
</feature>
<feature type="strand" evidence="14">
    <location>
        <begin position="227"/>
        <end position="229"/>
    </location>
</feature>
<feature type="helix" evidence="14">
    <location>
        <begin position="231"/>
        <end position="234"/>
    </location>
</feature>
<feature type="helix" evidence="14">
    <location>
        <begin position="238"/>
        <end position="244"/>
    </location>
</feature>
<feature type="strand" evidence="14">
    <location>
        <begin position="255"/>
        <end position="257"/>
    </location>
</feature>
<feature type="strand" evidence="14">
    <location>
        <begin position="260"/>
        <end position="262"/>
    </location>
</feature>
<feature type="turn" evidence="14">
    <location>
        <begin position="266"/>
        <end position="268"/>
    </location>
</feature>
<feature type="helix" evidence="14">
    <location>
        <begin position="281"/>
        <end position="283"/>
    </location>
</feature>
<feature type="strand" evidence="16">
    <location>
        <begin position="288"/>
        <end position="291"/>
    </location>
</feature>
<feature type="helix" evidence="14">
    <location>
        <begin position="292"/>
        <end position="294"/>
    </location>
</feature>
<feature type="helix" evidence="14">
    <location>
        <begin position="296"/>
        <end position="319"/>
    </location>
</feature>
<feature type="helix" evidence="14">
    <location>
        <begin position="325"/>
        <end position="346"/>
    </location>
</feature>
<feature type="helix" evidence="14">
    <location>
        <begin position="348"/>
        <end position="353"/>
    </location>
</feature>
<feature type="helix" evidence="14">
    <location>
        <begin position="363"/>
        <end position="366"/>
    </location>
</feature>
<feature type="strand" evidence="17">
    <location>
        <begin position="367"/>
        <end position="369"/>
    </location>
</feature>
<feature type="helix" evidence="14">
    <location>
        <begin position="379"/>
        <end position="384"/>
    </location>
</feature>
<feature type="helix" evidence="14">
    <location>
        <begin position="388"/>
        <end position="390"/>
    </location>
</feature>
<feature type="strand" evidence="14">
    <location>
        <begin position="393"/>
        <end position="397"/>
    </location>
</feature>
<feature type="strand" evidence="14">
    <location>
        <begin position="400"/>
        <end position="402"/>
    </location>
</feature>
<feature type="helix" evidence="14">
    <location>
        <begin position="404"/>
        <end position="407"/>
    </location>
</feature>
<feature type="helix" evidence="14">
    <location>
        <begin position="413"/>
        <end position="417"/>
    </location>
</feature>
<feature type="helix" evidence="14">
    <location>
        <begin position="419"/>
        <end position="428"/>
    </location>
</feature>
<feature type="strand" evidence="14">
    <location>
        <begin position="434"/>
        <end position="438"/>
    </location>
</feature>
<feature type="turn" evidence="14">
    <location>
        <begin position="442"/>
        <end position="444"/>
    </location>
</feature>
<feature type="helix" evidence="14">
    <location>
        <begin position="445"/>
        <end position="457"/>
    </location>
</feature>
<feature type="helix" evidence="14">
    <location>
        <begin position="463"/>
        <end position="469"/>
    </location>
</feature>
<feature type="helix" evidence="14">
    <location>
        <begin position="478"/>
        <end position="482"/>
    </location>
</feature>
<feature type="strand" evidence="14">
    <location>
        <begin position="483"/>
        <end position="485"/>
    </location>
</feature>
<feature type="helix" evidence="14">
    <location>
        <begin position="486"/>
        <end position="495"/>
    </location>
</feature>
<feature type="helix" evidence="14">
    <location>
        <begin position="498"/>
        <end position="500"/>
    </location>
</feature>
<feature type="helix" evidence="14">
    <location>
        <begin position="503"/>
        <end position="509"/>
    </location>
</feature>
<feature type="strand" evidence="15">
    <location>
        <begin position="517"/>
        <end position="519"/>
    </location>
</feature>
<feature type="helix" evidence="14">
    <location>
        <begin position="520"/>
        <end position="535"/>
    </location>
</feature>
<feature type="helix" evidence="14">
    <location>
        <begin position="538"/>
        <end position="540"/>
    </location>
</feature>
<feature type="turn" evidence="14">
    <location>
        <begin position="542"/>
        <end position="544"/>
    </location>
</feature>
<feature type="helix" evidence="14">
    <location>
        <begin position="547"/>
        <end position="550"/>
    </location>
</feature>
<feature type="helix" evidence="14">
    <location>
        <begin position="553"/>
        <end position="560"/>
    </location>
</feature>
<feature type="helix" evidence="14">
    <location>
        <begin position="564"/>
        <end position="569"/>
    </location>
</feature>
<feature type="strand" evidence="14">
    <location>
        <begin position="572"/>
        <end position="574"/>
    </location>
</feature>
<name>PGH1_SHEEP</name>
<gene>
    <name type="primary">PTGS1</name>
    <name type="synonym">COX1</name>
</gene>
<sequence>MSRQSISLRFPLLLLLLSPSPVFSADPGAPAPVNPCCYYPCQHQGICVRFGLDRYQCDCTRTGYSGPNCTIPEIWTWLRTTLRPSPSFIHFLLTHGRWLWDFVNATFIRDTLMRLVLTVRSNLIPSPPTYNIAHDYISWESFSNVSYYTRILPSVPRDCPTPMDTKGKKQLPDAEFLSRRFLLRRKFIPDPQSTNLMFAFFAQHFTHQFFKTSGKMGPGFTKALGHGVDLGHIYGDNLERQYQLRLFKDGKLKYQMLNGEVYPPSVEEAPVLMHYPRGIPPQSQMAVGQEVFGLLPGLMLYATIWLREHNRVCDLLKAEHPTWGDEQLFQTARLILIGETIKIVIEEYVQQLSGYFLQLKFDPELLFGAQFQYRNRIAMEFNQLYHWHPLMPDSFRVGPQDYSYEQFLFNTSMLVDYGVEALVDAFSRQPAGRIGGGRNIDHHILHVAVDVIKESRVLRLQPFNEYRKRFGMKPYTSFQELTGEKEMAAELEELYGDIDALEFYPGLLLEKCHPNSIFGESMIEMGAPFSLKGLLGNPICSPEYWKASTFGGEVGFNLVKTATLKKLVCLNTKTCPYVSFHVPDPRQEDRPGVERPPTEL</sequence>
<reference key="1">
    <citation type="journal article" date="1988" name="Proc. Natl. Acad. Sci. U.S.A.">
        <title>Primary structure of prostaglandin G/H synthase from sheep vesicular gland determined from the complementary DNA sequence.</title>
        <authorList>
            <person name="Dewitt D.L."/>
            <person name="Smith W.L."/>
        </authorList>
    </citation>
    <scope>NUCLEOTIDE SEQUENCE [MRNA]</scope>
    <scope>PARTIAL PROTEIN SEQUENCE</scope>
    <scope>VARIANT GLY-164</scope>
    <source>
        <tissue>Seminal vesicle</tissue>
    </source>
</reference>
<reference key="2">
    <citation type="journal article" date="1988" name="FEBS Lett.">
        <title>Primary structure of sheep prostaglandin endoperoxide synthase deduced from cDNA sequence.</title>
        <authorList>
            <person name="Yokoyama C."/>
            <person name="Takai T."/>
            <person name="Tanabe T."/>
        </authorList>
    </citation>
    <scope>NUCLEOTIDE SEQUENCE [MRNA]</scope>
    <scope>PARTIAL PROTEIN SEQUENCE</scope>
</reference>
<reference key="3">
    <citation type="journal article" date="1988" name="J. Biol. Chem.">
        <title>Isolation and characterization of the complementary DNA for sheep seminal vesicle prostaglandin endoperoxide synthase (cyclooxygenase).</title>
        <authorList>
            <person name="Merlie J."/>
            <person name="Fagan D."/>
            <person name="Mudd J."/>
            <person name="Needleman P."/>
        </authorList>
    </citation>
    <scope>NUCLEOTIDE SEQUENCE [MRNA]</scope>
    <scope>VARIANT GLY-164</scope>
</reference>
<reference key="4">
    <citation type="journal article" date="1983" name="Biochemistry">
        <title>Isolation and covalent structure of the aspirin-modified, active-site region of prostaglandin synthetase.</title>
        <authorList>
            <person name="Roth G.J."/>
            <person name="Machuga E.T."/>
            <person name="Ozols J."/>
        </authorList>
    </citation>
    <scope>PROTEIN SEQUENCE OF 523-544</scope>
</reference>
<reference key="5">
    <citation type="journal article" date="1990" name="J. Biol. Chem.">
        <title>The aspirin and heme-binding sites of ovine and murine prostaglandin endoperoxide synthases.</title>
        <authorList>
            <person name="Dewitt D.L."/>
            <person name="El-Harith E.A."/>
            <person name="Kraemer S.A."/>
            <person name="Andrews M.J."/>
            <person name="Yao E.F."/>
            <person name="Armstrong R.L."/>
            <person name="Smith W.L."/>
        </authorList>
    </citation>
    <scope>HEME-BINDING SITE</scope>
</reference>
<reference key="6">
    <citation type="journal article" date="1990" name="J. Biol. Chem.">
        <title>Tyrosine 385 of prostaglandin endoperoxide synthase is required for cyclooxygenase catalysis.</title>
        <authorList>
            <person name="Shimokawa T."/>
            <person name="Kulmacz R.J."/>
            <person name="Dewitt D.L."/>
            <person name="Smith W.L."/>
        </authorList>
    </citation>
    <scope>ACTIVE SITE TYR-385</scope>
    <scope>MUTAGENESIS OF TYR-385</scope>
</reference>
<reference key="7">
    <citation type="journal article" date="1993" name="J. Biol. Chem.">
        <title>N-glycosylation of prostaglandin endoperoxide synthases-1 and -2 and their orientations in the endoplasmic reticulum.</title>
        <authorList>
            <person name="Otto J.C."/>
            <person name="Dewitt D.L."/>
            <person name="Smith W.L."/>
        </authorList>
    </citation>
    <scope>GLYCOSYLATION AT ASN-68; ASN-144 AND ASN-410</scope>
    <scope>LACK OF GLYCOSYLATION AT ASN-104</scope>
</reference>
<reference key="8">
    <citation type="journal article" date="1994" name="Biochim. Biophys. Acta">
        <title>Purification, characterization and selective inhibition of human prostaglandin G/H synthase 1 and 2 expressed in the baculovirus system.</title>
        <authorList>
            <person name="Barnett J."/>
            <person name="Chow J."/>
            <person name="Ives D."/>
            <person name="Chiou M."/>
            <person name="Mackenzie R."/>
            <person name="Osen E."/>
            <person name="Nguyen B."/>
            <person name="Tsing S."/>
            <person name="Bach C."/>
            <person name="Freire J."/>
        </authorList>
    </citation>
    <scope>FUNCTION</scope>
    <scope>CATALYTIC ACTIVITY</scope>
    <scope>BIOPHYSICOCHEMICAL PROPERTIES</scope>
</reference>
<reference key="9">
    <citation type="journal article" date="1998" name="Arch. Biochem. Biophys.">
        <title>Stereochemistry of oxygenation of linoleic acid catalyzed by prostaglandin-endoperoxide H synthase-2.</title>
        <authorList>
            <person name="Hamberg M."/>
        </authorList>
    </citation>
    <scope>FUNCTION</scope>
    <scope>CATALYTIC ACTIVITY</scope>
</reference>
<reference key="10">
    <citation type="journal article" date="1999" name="J. Biol. Chem.">
        <title>Arachidonic acid oxygenation by COX-1 and COX-2. Mechanisms of catalysis and inhibition.</title>
        <authorList>
            <person name="Marnett L.J."/>
            <person name="Rowlinson S.W."/>
            <person name="Goodwin D.C."/>
            <person name="Kalgutkar A.S."/>
            <person name="Lanzo C.A."/>
        </authorList>
    </citation>
    <scope>FUNCTION</scope>
    <scope>INHIBITION BY NSAIDS</scope>
</reference>
<reference key="11">
    <citation type="journal article" date="1994" name="Nature">
        <title>The X-ray crystal structure of the membrane protein prostaglandin H2 synthase-1.</title>
        <authorList>
            <person name="Picot D."/>
            <person name="Loll P.J."/>
            <person name="Garavito R.M."/>
        </authorList>
    </citation>
    <scope>X-RAY CRYSTALLOGRAPHY (3.5 ANGSTROMS)</scope>
</reference>
<reference key="12">
    <citation type="journal article" date="1995" name="Nat. Struct. Biol.">
        <title>The structural basis of aspirin activity inferred from the crystal structure of inactivated prostaglandin H2 synthase.</title>
        <authorList>
            <person name="Loll P.J."/>
            <person name="Picot D."/>
            <person name="Garavito R.M."/>
        </authorList>
    </citation>
    <scope>X-RAY CRYSTALLOGRAPHY (3.4 ANGSTROMS)</scope>
</reference>
<reference key="13">
    <citation type="journal article" date="1996" name="Biochemistry">
        <title>Synthesis and use of iodinated antiinflammatory drug analogs as crystallographic probes of the prostaglandin H2 synthase cyclooxygenase active site.</title>
        <authorList>
            <person name="Loll P.J."/>
            <person name="Picot D."/>
            <person name="Ekabo O."/>
            <person name="Garavito R.M."/>
        </authorList>
    </citation>
    <scope>X-RAY CRYSTALLOGRAPHY (3.5 ANGSTROMS)</scope>
</reference>
<reference key="14">
    <citation type="journal article" date="2000" name="Science">
        <title>The productive conformation of arachidonic acid bound to prostaglandin synthase.</title>
        <authorList>
            <person name="Malkowski M.G."/>
            <person name="Ginell S.L."/>
            <person name="Smith W.L."/>
            <person name="Garavito R.M."/>
        </authorList>
    </citation>
    <scope>X-RAY CRYSTALLOGRAPHY (3.0 ANGSTROMS)</scope>
</reference>
<reference key="15">
    <citation type="journal article" date="2001" name="J. Biol. Chem.">
        <title>Mutational and X-ray crystallographic analysis of the interaction of dihomo-gamma-linolenic acid with prostaglandin endoperoxide H synthases.</title>
        <authorList>
            <person name="Thuresson E.D."/>
            <person name="Malkowski M.G."/>
            <person name="Lakkides K.M."/>
            <person name="Rieke C.J."/>
            <person name="Mulichak A.M."/>
            <person name="Ginell S.L."/>
            <person name="Garavito R.M."/>
            <person name="Smith W.L."/>
        </authorList>
    </citation>
    <scope>X-RAY CRYSTALLOGRAPHY (3.0 ANGSTROMS)</scope>
</reference>
<reference key="16">
    <citation type="journal article" date="2001" name="Biochemistry">
        <title>Structural analysis of NSAID binding by prostaglandin H2 synthase: time-dependent and time-independent inhibitors elicit identical enzyme conformations.</title>
        <authorList>
            <person name="Selinsky B.S."/>
            <person name="Gupta K."/>
            <person name="Sharkey C.T."/>
            <person name="Loll P.J."/>
        </authorList>
    </citation>
    <scope>X-RAY CRYSTALLOGRAPHY (2.61 ANGSTROMS)</scope>
</reference>
<keyword id="KW-0002">3D-structure</keyword>
<keyword id="KW-0223">Dioxygenase</keyword>
<keyword id="KW-0903">Direct protein sequencing</keyword>
<keyword id="KW-1015">Disulfide bond</keyword>
<keyword id="KW-0245">EGF-like domain</keyword>
<keyword id="KW-0256">Endoplasmic reticulum</keyword>
<keyword id="KW-0275">Fatty acid biosynthesis</keyword>
<keyword id="KW-0276">Fatty acid metabolism</keyword>
<keyword id="KW-0325">Glycoprotein</keyword>
<keyword id="KW-0349">Heme</keyword>
<keyword id="KW-0408">Iron</keyword>
<keyword id="KW-0444">Lipid biosynthesis</keyword>
<keyword id="KW-0443">Lipid metabolism</keyword>
<keyword id="KW-0472">Membrane</keyword>
<keyword id="KW-0479">Metal-binding</keyword>
<keyword id="KW-0492">Microsome</keyword>
<keyword id="KW-0560">Oxidoreductase</keyword>
<keyword id="KW-0575">Peroxidase</keyword>
<keyword id="KW-0643">Prostaglandin biosynthesis</keyword>
<keyword id="KW-0644">Prostaglandin metabolism</keyword>
<keyword id="KW-1185">Reference proteome</keyword>
<keyword id="KW-0732">Signal</keyword>
<keyword id="KW-0812">Transmembrane</keyword>
<keyword id="KW-1133">Transmembrane helix</keyword>
<protein>
    <recommendedName>
        <fullName>Prostaglandin G/H synthase 1</fullName>
        <ecNumber evidence="7">1.14.99.1</ecNumber>
    </recommendedName>
    <alternativeName>
        <fullName>Cyclooxygenase-1</fullName>
        <shortName>COX-1</shortName>
    </alternativeName>
    <alternativeName>
        <fullName>Prostaglandin H2 synthase 1</fullName>
        <shortName>PGH synthase 1</shortName>
        <shortName>PGHS-1</shortName>
        <shortName>PHS 1</shortName>
    </alternativeName>
    <alternativeName>
        <fullName>Prostaglandin-endoperoxide synthase 1</fullName>
    </alternativeName>
</protein>